<sequence length="183" mass="20226">MSNSHHTSQGRRNKLSVWVKKIINTTTTTNASVSSSKPRRGTRAGPTRVKRAELDPDGTTISSSLRPLVDRNSLHSSESDDEGDRRVAWDEPPTGKVRQQQQQQQQQQNDNASVIPLVSFCSSSVKSSTFSDIHSIQSTRPTIFSNRTFETNSSVLAIPPQSILDRSRTLPPSNASNTTTRRP</sequence>
<organism>
    <name type="scientific">Saccharomyces cerevisiae (strain ATCC 204508 / S288c)</name>
    <name type="common">Baker's yeast</name>
    <dbReference type="NCBI Taxonomy" id="559292"/>
    <lineage>
        <taxon>Eukaryota</taxon>
        <taxon>Fungi</taxon>
        <taxon>Dikarya</taxon>
        <taxon>Ascomycota</taxon>
        <taxon>Saccharomycotina</taxon>
        <taxon>Saccharomycetes</taxon>
        <taxon>Saccharomycetales</taxon>
        <taxon>Saccharomycetaceae</taxon>
        <taxon>Saccharomyces</taxon>
    </lineage>
</organism>
<accession>P36138</accession>
<accession>D6VXA7</accession>
<evidence type="ECO:0000256" key="1">
    <source>
        <dbReference type="SAM" id="MobiDB-lite"/>
    </source>
</evidence>
<evidence type="ECO:0000269" key="2">
    <source>
    </source>
</evidence>
<evidence type="ECO:0000305" key="3"/>
<evidence type="ECO:0007744" key="4">
    <source>
    </source>
</evidence>
<dbReference type="EMBL" id="Z28270">
    <property type="protein sequence ID" value="CAA82121.1"/>
    <property type="status" value="ALT_INIT"/>
    <property type="molecule type" value="Genomic_DNA"/>
</dbReference>
<dbReference type="EMBL" id="AY558179">
    <property type="protein sequence ID" value="AAS56505.1"/>
    <property type="status" value="ALT_INIT"/>
    <property type="molecule type" value="Genomic_DNA"/>
</dbReference>
<dbReference type="EMBL" id="BK006944">
    <property type="protein sequence ID" value="DAA09197.1"/>
    <property type="molecule type" value="Genomic_DNA"/>
</dbReference>
<dbReference type="PIR" id="S38117">
    <property type="entry name" value="S38117"/>
</dbReference>
<dbReference type="RefSeq" id="NP_012971.2">
    <property type="nucleotide sequence ID" value="NM_001179835.1"/>
</dbReference>
<dbReference type="BioGRID" id="34177">
    <property type="interactions" value="50"/>
</dbReference>
<dbReference type="FunCoup" id="P36138">
    <property type="interactions" value="25"/>
</dbReference>
<dbReference type="STRING" id="4932.YKR045C"/>
<dbReference type="iPTMnet" id="P36138"/>
<dbReference type="PaxDb" id="4932-YKR045C"/>
<dbReference type="PeptideAtlas" id="P36138"/>
<dbReference type="EnsemblFungi" id="YKR045C_mRNA">
    <property type="protein sequence ID" value="YKR045C"/>
    <property type="gene ID" value="YKR045C"/>
</dbReference>
<dbReference type="GeneID" id="853919"/>
<dbReference type="KEGG" id="sce:YKR045C"/>
<dbReference type="AGR" id="SGD:S000001753"/>
<dbReference type="SGD" id="S000001753">
    <property type="gene designation" value="YKR045C"/>
</dbReference>
<dbReference type="VEuPathDB" id="FungiDB:YKR045C"/>
<dbReference type="eggNOG" id="ENOG502SAAB">
    <property type="taxonomic scope" value="Eukaryota"/>
</dbReference>
<dbReference type="HOGENOM" id="CLU_083988_0_0_1"/>
<dbReference type="InParanoid" id="P36138"/>
<dbReference type="OMA" id="HANSIHT"/>
<dbReference type="OrthoDB" id="4035860at2759"/>
<dbReference type="BioCyc" id="YEAST:G3O-32016-MONOMER"/>
<dbReference type="BioGRID-ORCS" id="853919">
    <property type="hits" value="4 hits in 10 CRISPR screens"/>
</dbReference>
<dbReference type="PRO" id="PR:P36138"/>
<dbReference type="Proteomes" id="UP000002311">
    <property type="component" value="Chromosome XI"/>
</dbReference>
<dbReference type="RNAct" id="P36138">
    <property type="molecule type" value="protein"/>
</dbReference>
<dbReference type="GO" id="GO:0005737">
    <property type="term" value="C:cytoplasm"/>
    <property type="evidence" value="ECO:0007005"/>
    <property type="project" value="SGD"/>
</dbReference>
<proteinExistence type="evidence at protein level"/>
<feature type="chain" id="PRO_0000203213" description="Uncharacterized protein YKR045C">
    <location>
        <begin position="1"/>
        <end position="183"/>
    </location>
</feature>
<feature type="region of interest" description="Disordered" evidence="1">
    <location>
        <begin position="24"/>
        <end position="111"/>
    </location>
</feature>
<feature type="region of interest" description="Disordered" evidence="1">
    <location>
        <begin position="160"/>
        <end position="183"/>
    </location>
</feature>
<feature type="compositionally biased region" description="Low complexity" evidence="1">
    <location>
        <begin position="99"/>
        <end position="108"/>
    </location>
</feature>
<feature type="compositionally biased region" description="Polar residues" evidence="1">
    <location>
        <begin position="170"/>
        <end position="183"/>
    </location>
</feature>
<feature type="cross-link" description="Glycyl lysine isopeptide (Lys-Gly) (interchain with G-Cter in ubiquitin)" evidence="4">
    <location>
        <position position="21"/>
    </location>
</feature>
<comment type="subcellular location">
    <subcellularLocation>
        <location evidence="2">Cytoplasm</location>
    </subcellularLocation>
</comment>
<comment type="sequence caution" evidence="3">
    <conflict type="erroneous initiation">
        <sequence resource="EMBL-CDS" id="AAS56505"/>
    </conflict>
</comment>
<comment type="sequence caution" evidence="3">
    <conflict type="erroneous initiation">
        <sequence resource="EMBL-CDS" id="CAA82121"/>
    </conflict>
</comment>
<keyword id="KW-0963">Cytoplasm</keyword>
<keyword id="KW-1017">Isopeptide bond</keyword>
<keyword id="KW-1185">Reference proteome</keyword>
<keyword id="KW-0832">Ubl conjugation</keyword>
<protein>
    <recommendedName>
        <fullName>Uncharacterized protein YKR045C</fullName>
    </recommendedName>
</protein>
<name>YK25_YEAST</name>
<reference key="1">
    <citation type="journal article" date="1994" name="Nature">
        <title>Complete DNA sequence of yeast chromosome XI.</title>
        <authorList>
            <person name="Dujon B."/>
            <person name="Alexandraki D."/>
            <person name="Andre B."/>
            <person name="Ansorge W."/>
            <person name="Baladron V."/>
            <person name="Ballesta J.P.G."/>
            <person name="Banrevi A."/>
            <person name="Bolle P.-A."/>
            <person name="Bolotin-Fukuhara M."/>
            <person name="Bossier P."/>
            <person name="Bou G."/>
            <person name="Boyer J."/>
            <person name="Buitrago M.J."/>
            <person name="Cheret G."/>
            <person name="Colleaux L."/>
            <person name="Daignan-Fornier B."/>
            <person name="del Rey F."/>
            <person name="Dion C."/>
            <person name="Domdey H."/>
            <person name="Duesterhoeft A."/>
            <person name="Duesterhus S."/>
            <person name="Entian K.-D."/>
            <person name="Erfle H."/>
            <person name="Esteban P.F."/>
            <person name="Feldmann H."/>
            <person name="Fernandes L."/>
            <person name="Fobo G.M."/>
            <person name="Fritz C."/>
            <person name="Fukuhara H."/>
            <person name="Gabel C."/>
            <person name="Gaillon L."/>
            <person name="Garcia-Cantalejo J.M."/>
            <person name="Garcia-Ramirez J.J."/>
            <person name="Gent M.E."/>
            <person name="Ghazvini M."/>
            <person name="Goffeau A."/>
            <person name="Gonzalez A."/>
            <person name="Grothues D."/>
            <person name="Guerreiro P."/>
            <person name="Hegemann J.H."/>
            <person name="Hewitt N."/>
            <person name="Hilger F."/>
            <person name="Hollenberg C.P."/>
            <person name="Horaitis O."/>
            <person name="Indge K.J."/>
            <person name="Jacquier A."/>
            <person name="James C.M."/>
            <person name="Jauniaux J.-C."/>
            <person name="Jimenez A."/>
            <person name="Keuchel H."/>
            <person name="Kirchrath L."/>
            <person name="Kleine K."/>
            <person name="Koetter P."/>
            <person name="Legrain P."/>
            <person name="Liebl S."/>
            <person name="Louis E.J."/>
            <person name="Maia e Silva A."/>
            <person name="Marck C."/>
            <person name="Monnier A.-L."/>
            <person name="Moestl D."/>
            <person name="Mueller S."/>
            <person name="Obermaier B."/>
            <person name="Oliver S.G."/>
            <person name="Pallier C."/>
            <person name="Pascolo S."/>
            <person name="Pfeiffer F."/>
            <person name="Philippsen P."/>
            <person name="Planta R.J."/>
            <person name="Pohl F.M."/>
            <person name="Pohl T.M."/>
            <person name="Poehlmann R."/>
            <person name="Portetelle D."/>
            <person name="Purnelle B."/>
            <person name="Puzos V."/>
            <person name="Ramezani Rad M."/>
            <person name="Rasmussen S.W."/>
            <person name="Remacha M.A."/>
            <person name="Revuelta J.L."/>
            <person name="Richard G.-F."/>
            <person name="Rieger M."/>
            <person name="Rodrigues-Pousada C."/>
            <person name="Rose M."/>
            <person name="Rupp T."/>
            <person name="Santos M.A."/>
            <person name="Schwager C."/>
            <person name="Sensen C."/>
            <person name="Skala J."/>
            <person name="Soares H."/>
            <person name="Sor F."/>
            <person name="Stegemann J."/>
            <person name="Tettelin H."/>
            <person name="Thierry A."/>
            <person name="Tzermia M."/>
            <person name="Urrestarazu L.A."/>
            <person name="van Dyck L."/>
            <person name="van Vliet-Reedijk J.C."/>
            <person name="Valens M."/>
            <person name="Vandenbol M."/>
            <person name="Vilela C."/>
            <person name="Vissers S."/>
            <person name="von Wettstein D."/>
            <person name="Voss H."/>
            <person name="Wiemann S."/>
            <person name="Xu G."/>
            <person name="Zimmermann J."/>
            <person name="Haasemann M."/>
            <person name="Becker I."/>
            <person name="Mewes H.-W."/>
        </authorList>
    </citation>
    <scope>NUCLEOTIDE SEQUENCE [LARGE SCALE GENOMIC DNA]</scope>
    <source>
        <strain>ATCC 204508 / S288c</strain>
    </source>
</reference>
<reference key="2">
    <citation type="journal article" date="2014" name="G3 (Bethesda)">
        <title>The reference genome sequence of Saccharomyces cerevisiae: Then and now.</title>
        <authorList>
            <person name="Engel S.R."/>
            <person name="Dietrich F.S."/>
            <person name="Fisk D.G."/>
            <person name="Binkley G."/>
            <person name="Balakrishnan R."/>
            <person name="Costanzo M.C."/>
            <person name="Dwight S.S."/>
            <person name="Hitz B.C."/>
            <person name="Karra K."/>
            <person name="Nash R.S."/>
            <person name="Weng S."/>
            <person name="Wong E.D."/>
            <person name="Lloyd P."/>
            <person name="Skrzypek M.S."/>
            <person name="Miyasato S.R."/>
            <person name="Simison M."/>
            <person name="Cherry J.M."/>
        </authorList>
    </citation>
    <scope>GENOME REANNOTATION</scope>
    <source>
        <strain>ATCC 204508 / S288c</strain>
    </source>
</reference>
<reference key="3">
    <citation type="journal article" date="2007" name="Genome Res.">
        <title>Approaching a complete repository of sequence-verified protein-encoding clones for Saccharomyces cerevisiae.</title>
        <authorList>
            <person name="Hu Y."/>
            <person name="Rolfs A."/>
            <person name="Bhullar B."/>
            <person name="Murthy T.V.S."/>
            <person name="Zhu C."/>
            <person name="Berger M.F."/>
            <person name="Camargo A.A."/>
            <person name="Kelley F."/>
            <person name="McCarron S."/>
            <person name="Jepson D."/>
            <person name="Richardson A."/>
            <person name="Raphael J."/>
            <person name="Moreira D."/>
            <person name="Taycher E."/>
            <person name="Zuo D."/>
            <person name="Mohr S."/>
            <person name="Kane M.F."/>
            <person name="Williamson J."/>
            <person name="Simpson A.J.G."/>
            <person name="Bulyk M.L."/>
            <person name="Harlow E."/>
            <person name="Marsischky G."/>
            <person name="Kolodner R.D."/>
            <person name="LaBaer J."/>
        </authorList>
    </citation>
    <scope>NUCLEOTIDE SEQUENCE [GENOMIC DNA]</scope>
    <source>
        <strain>ATCC 204508 / S288c</strain>
    </source>
</reference>
<reference key="4">
    <citation type="journal article" date="2002" name="Genes Dev.">
        <title>Subcellular localization of the yeast proteome.</title>
        <authorList>
            <person name="Kumar A."/>
            <person name="Agarwal S."/>
            <person name="Heyman J.A."/>
            <person name="Matson S."/>
            <person name="Heidtman M."/>
            <person name="Piccirillo S."/>
            <person name="Umansky L."/>
            <person name="Drawid A."/>
            <person name="Jansen R."/>
            <person name="Liu Y."/>
            <person name="Cheung K.-H."/>
            <person name="Miller P."/>
            <person name="Gerstein M."/>
            <person name="Roeder G.S."/>
            <person name="Snyder M."/>
        </authorList>
    </citation>
    <scope>SUBCELLULAR LOCATION</scope>
</reference>
<reference key="5">
    <citation type="journal article" date="2003" name="Nature">
        <title>Sequencing and comparison of yeast species to identify genes and regulatory elements.</title>
        <authorList>
            <person name="Kellis M."/>
            <person name="Patterson N."/>
            <person name="Endrizzi M."/>
            <person name="Birren B.W."/>
            <person name="Lander E.S."/>
        </authorList>
    </citation>
    <scope>IDENTIFICATION OF PROBABLE INITIATION SITE</scope>
</reference>
<reference key="6">
    <citation type="journal article" date="2012" name="Proteomics">
        <title>Sites of ubiquitin attachment in Saccharomyces cerevisiae.</title>
        <authorList>
            <person name="Starita L.M."/>
            <person name="Lo R.S."/>
            <person name="Eng J.K."/>
            <person name="von Haller P.D."/>
            <person name="Fields S."/>
        </authorList>
    </citation>
    <scope>UBIQUITINATION [LARGE SCALE ANALYSIS] AT LYS-21</scope>
    <scope>IDENTIFICATION BY MASS SPECTROMETRY [LARGE SCALE ANALYSIS]</scope>
</reference>
<gene>
    <name type="ordered locus">YKR045C</name>
</gene>